<dbReference type="EMBL" id="M74011">
    <property type="protein sequence ID" value="AAC37025.1"/>
    <property type="molecule type" value="Genomic_DNA"/>
</dbReference>
<dbReference type="PIR" id="H40361">
    <property type="entry name" value="H40361"/>
</dbReference>
<dbReference type="RefSeq" id="WP_010891230.1">
    <property type="nucleotide sequence ID" value="NZ_KN150737.1"/>
</dbReference>
<dbReference type="SMR" id="Q01249"/>
<dbReference type="DIP" id="DIP-61296N"/>
<dbReference type="IntAct" id="Q01249">
    <property type="interactions" value="1"/>
</dbReference>
<dbReference type="KEGG" id="yet:CH48_4195"/>
<dbReference type="GO" id="GO:0005576">
    <property type="term" value="C:extracellular region"/>
    <property type="evidence" value="ECO:0007669"/>
    <property type="project" value="UniProtKB-SubCell"/>
</dbReference>
<dbReference type="GO" id="GO:0030257">
    <property type="term" value="C:type III protein secretion system complex"/>
    <property type="evidence" value="ECO:0007669"/>
    <property type="project" value="InterPro"/>
</dbReference>
<dbReference type="GO" id="GO:0030254">
    <property type="term" value="P:protein secretion by the type III secretion system"/>
    <property type="evidence" value="ECO:0007669"/>
    <property type="project" value="InterPro"/>
</dbReference>
<dbReference type="Gene3D" id="1.10.10.1000">
    <property type="entry name" value="Type III secretion system virulence factor YopR, core domain"/>
    <property type="match status" value="1"/>
</dbReference>
<dbReference type="InterPro" id="IPR013349">
    <property type="entry name" value="T3SS_YopR"/>
</dbReference>
<dbReference type="InterPro" id="IPR041814">
    <property type="entry name" value="YopR_core"/>
</dbReference>
<dbReference type="NCBIfam" id="TIGR02509">
    <property type="entry name" value="type_III_yopR"/>
    <property type="match status" value="1"/>
</dbReference>
<dbReference type="Pfam" id="PF09025">
    <property type="entry name" value="T3SS_needle_reg"/>
    <property type="match status" value="1"/>
</dbReference>
<dbReference type="SUPFAM" id="SSF140591">
    <property type="entry name" value="Type III secretion system domain"/>
    <property type="match status" value="1"/>
</dbReference>
<evidence type="ECO:0000269" key="1">
    <source>
    </source>
</evidence>
<evidence type="ECO:0000269" key="2">
    <source>
    </source>
</evidence>
<evidence type="ECO:0000269" key="3">
    <source>
    </source>
</evidence>
<evidence type="ECO:0000269" key="4">
    <source>
    </source>
</evidence>
<evidence type="ECO:0000269" key="5">
    <source>
    </source>
</evidence>
<evidence type="ECO:0000269" key="6">
    <source>
    </source>
</evidence>
<evidence type="ECO:0000303" key="7">
    <source>
    </source>
</evidence>
<evidence type="ECO:0000305" key="8"/>
<evidence type="ECO:0000305" key="9">
    <source>
    </source>
</evidence>
<evidence type="ECO:0000305" key="10">
    <source>
    </source>
</evidence>
<evidence type="ECO:0000305" key="11">
    <source>
    </source>
</evidence>
<gene>
    <name evidence="7" type="primary">yscH</name>
</gene>
<name>YOPR_YEREN</name>
<reference key="1">
    <citation type="journal article" date="1991" name="J. Bacteriol.">
        <title>Analysis of virC, an operon involved in the secretion of Yop proteins by Yersinia enterocolitica.</title>
        <authorList>
            <person name="Michiels T."/>
            <person name="Vanooteghem J.-C."/>
            <person name="de Rouvroit C."/>
            <person name="China B."/>
            <person name="Gustin A."/>
            <person name="Boudry P."/>
            <person name="Cornelis G.R."/>
        </authorList>
    </citation>
    <scope>NUCLEOTIDE SEQUENCE [GENOMIC DNA]</scope>
    <scope>INDUCTION</scope>
    <source>
        <strain>439-80 / Serotype O:9</strain>
    </source>
</reference>
<reference key="2">
    <citation type="journal article" date="2008" name="Mol. Microbiol.">
        <title>Yersinia enterocolitica type III secretion of YopR requires a structure in its mRNA.</title>
        <authorList>
            <person name="Blaylock B."/>
            <person name="Sorg J.A."/>
            <person name="Schneewind O."/>
        </authorList>
    </citation>
    <scope>PROTEIN SEQUENCE OF 2-5</scope>
    <scope>SUBCELLULAR LOCATION</scope>
    <scope>SECRETION SIGNAL</scope>
    <scope>EXPRESSION OF TRANSLATIONAL HYBRIDS</scope>
    <scope>MUTAGENESIS OF GLU-140 AND PRO-146</scope>
</reference>
<reference key="3">
    <citation type="journal article" date="1995" name="Mol. Microbiol.">
        <title>Mutational analysis of the Yersinia enterocolitica virC operon: characterization of yscE, F, G, I, J, K required for Yop secretion and yscH encoding YopR.</title>
        <authorList>
            <person name="Allaoui A."/>
            <person name="Schulte R."/>
            <person name="Cornelis G.R."/>
        </authorList>
    </citation>
    <scope>FUNCTION IN VIRULENCE</scope>
    <scope>SUBCELLULAR LOCATION</scope>
    <scope>DISRUPTION PHENOTYPE</scope>
    <source>
        <strain>W227 / Serotype O:9</strain>
    </source>
</reference>
<reference key="4">
    <citation type="journal article" date="1999" name="Mol. Microbiol.">
        <title>Type III machines of pathogenic yersiniae secrete virulence factors into the extracellular milieu.</title>
        <authorList>
            <person name="Lee V.T."/>
            <person name="Schneewind O."/>
        </authorList>
    </citation>
    <scope>FUNCTION</scope>
    <scope>SUBCELLULAR LOCATION</scope>
    <scope>DISRUPTION PHENOTYPE</scope>
    <source>
        <strain>W22703 / Serotype O:9 / Biotype 2</strain>
    </source>
</reference>
<reference key="5">
    <citation type="journal article" date="2006" name="Proc. Natl. Acad. Sci. U.S.A.">
        <title>Secretion signal recognition by YscN, the Yersinia type III secretion ATPase.</title>
        <authorList>
            <person name="Sorg J.A."/>
            <person name="Blaylock B."/>
            <person name="Schneewind O."/>
        </authorList>
    </citation>
    <scope>SUBCELLULAR LOCATION</scope>
    <scope>SECRETION SIGNAL</scope>
    <scope>EXPRESSION OF TRANSLATIONAL HYBRIDS</scope>
    <source>
        <strain>W22703 / Serotype O:9 / Biotype 2</strain>
    </source>
</reference>
<reference key="6">
    <citation type="journal article" date="2010" name="Mol. Microbiol.">
        <title>YopR impacts type III needle polymerization in Yersinia species.</title>
        <authorList>
            <person name="Blaylock B."/>
            <person name="Berube B.J."/>
            <person name="Schneewind O."/>
        </authorList>
    </citation>
    <scope>FUNCTION</scope>
    <scope>DISRUPTION PHENOTYPE</scope>
    <source>
        <strain>W22703 / Serotype O:9 / Biotype 2</strain>
    </source>
</reference>
<feature type="initiator methionine" description="Removed" evidence="4">
    <location>
        <position position="1"/>
    </location>
</feature>
<feature type="chain" id="PRO_0000066483" description="Type 3 secretion system regulator YopR">
    <location>
        <begin position="2"/>
        <end position="165"/>
    </location>
</feature>
<feature type="region of interest" description="5' secretion signal" evidence="9 10">
    <location>
        <begin position="2"/>
        <end position="11"/>
    </location>
</feature>
<feature type="region of interest" description="3' secretion signal" evidence="10">
    <location>
        <begin position="131"/>
        <end position="149"/>
    </location>
</feature>
<feature type="mutagenesis site" description="Not secreted in the presence of calcium or when yersiniae infect HeLa tissue culture cells. Cannot cause a type III blockade when fused to GST." evidence="4">
    <original>E</original>
    <variation>K</variation>
    <location>
        <position position="140"/>
    </location>
</feature>
<feature type="mutagenesis site" description="Not secreted in the presence of calcium or when yersiniae infected HeLa tissue culture cells." evidence="4">
    <original>P</original>
    <variation>I</variation>
    <location>
        <position position="146"/>
    </location>
</feature>
<protein>
    <recommendedName>
        <fullName evidence="8">Type 3 secretion system regulator YopR</fullName>
        <shortName evidence="8">T3SS regulator YopR</shortName>
    </recommendedName>
    <alternativeName>
        <fullName evidence="8">Yersinia outer protein R</fullName>
    </alternativeName>
    <alternativeName>
        <fullName evidence="7">Yersinia secretion protein H</fullName>
    </alternativeName>
</protein>
<accession>Q01249</accession>
<comment type="function">
    <text evidence="1 5 6">May be involved in the regulation of the assembly of the type III secretion system (T3SS), also called injectisome, which is used to inject bacterial effector proteins into eukaryotic host cells (PubMed:19968786). May control the secretion and/or polymerization of YscF/SctF, the principal component of the needle filament, thereby impacting the assembly of the T3SS (PubMed:19968786). Involved in pathogenesis (PubMed:10209737, PubMed:8709853). Essential for the establishment of Yersinia infections in a mouse model system (PubMed:10209737).</text>
</comment>
<comment type="interaction">
    <interactant intactId="EBI-15606767">
        <id>Q01249</id>
    </interactant>
    <interactant intactId="EBI-6502619">
        <id>P40290</id>
        <label>sctN</label>
    </interactant>
    <organismsDiffer>false</organismsDiffer>
    <experiments>2</experiments>
</comment>
<comment type="subcellular location">
    <subcellularLocation>
        <location evidence="1 2 4 6">Secreted</location>
    </subcellularLocation>
    <text evidence="1 2 4 11">Secreted via the type III secretion system (T3SS) (PubMed:10209737, PubMed:17050689). Mostly secreted into the extracellular milieu (PubMed:10209737). Secretion requires the presence of two elements, the N-terminal or 5' signal (positioned at codons 1-11) and an mRNA motif that resides within codons 131-149 (PubMed:17050689, PubMed:18976277).</text>
</comment>
<comment type="induction">
    <text evidence="3">At 37 degrees Celsius in the absence of calcium.</text>
</comment>
<comment type="disruption phenotype">
    <text evidence="1 5 6">Mutant displays reduced virulence in a mouse model system (PubMed:10209737, PubMed:8709853). It displays a reduced ability to inject effectors into macrophages and requires lower calcium concentrations to activate type III secretion than wild-type yersiniae (PubMed:19968786). Mutants secrete YscF into the extracellular medium but do not assemble needle complexes on the bacterial surface (PubMed:19968786). Disruption mutant still requires Ca(2+) for growth and can secrete the Yop proteins, with the exception of YopR (PubMed:8709853). Mutation does not abolish type III targeting or secretion (PubMed:10209737).</text>
</comment>
<comment type="miscellaneous">
    <text evidence="2 4">Fusion of YopR, an early secretion substrate, to the N-terminus of dihydrofolate reductase (DHFR), GST or other tightly folded proteins generates impassable hybrids that cannot travel the type III pathway and block the secretion machine (PubMed:17050689, PubMed:18976277). This blockade may be caused by binding of YopR hybrids to YscN/SctN, the ATPase that is involved in substrate recognition and in generating energy for type III secretion reactions (PubMed:17050689). When expressed during type III machine assembly, YopR-DHFR blocks all secretion (PubMed:17050689). Delayed expression of YopR-DHFR, when yersiniae have already engaged the type III pathway, blocks secretion of early (YscP/SctP) but not of late (effector Yops) substrates (PubMed:17050689).</text>
</comment>
<comment type="similarity">
    <text evidence="8">Belongs to the YopR family.</text>
</comment>
<proteinExistence type="evidence at protein level"/>
<keyword id="KW-0903">Direct protein sequencing</keyword>
<keyword id="KW-0614">Plasmid</keyword>
<keyword id="KW-0964">Secreted</keyword>
<keyword id="KW-0843">Virulence</keyword>
<sequence>MTVTLNRGSITSLMSSSQAVSTLQPAASELKTQLEHKLKSESAEKTREVLWQQYYASNPPDHAVLEVLATPVREALLARFGQHQGPVVPAIDLPELRSVLQQFDSFGKRREAILLQVLEGIKPNESQVGLPYLSELINKELMILLPYNSIVDSLLHNSHQIDMET</sequence>
<geneLocation type="plasmid">
    <name>pYV</name>
</geneLocation>
<organism>
    <name type="scientific">Yersinia enterocolitica</name>
    <dbReference type="NCBI Taxonomy" id="630"/>
    <lineage>
        <taxon>Bacteria</taxon>
        <taxon>Pseudomonadati</taxon>
        <taxon>Pseudomonadota</taxon>
        <taxon>Gammaproteobacteria</taxon>
        <taxon>Enterobacterales</taxon>
        <taxon>Yersiniaceae</taxon>
        <taxon>Yersinia</taxon>
    </lineage>
</organism>